<accession>O70417</accession>
<feature type="signal peptide" evidence="1">
    <location>
        <begin position="1"/>
        <end position="26"/>
    </location>
</feature>
<feature type="chain" id="PRO_0000024293" description="Prolactin-inducible protein homolog">
    <location>
        <begin position="27"/>
        <end position="146"/>
    </location>
</feature>
<feature type="modified residue" description="Pyrrolidone carboxylic acid" evidence="2">
    <location>
        <position position="27"/>
    </location>
</feature>
<feature type="glycosylation site" description="N-linked (GlcNAc...) asparagine" evidence="3">
    <location>
        <position position="29"/>
    </location>
</feature>
<feature type="disulfide bond" evidence="1">
    <location>
        <begin position="65"/>
        <end position="91"/>
    </location>
</feature>
<feature type="disulfide bond" evidence="1">
    <location>
        <begin position="89"/>
        <end position="123"/>
    </location>
</feature>
<organism>
    <name type="scientific">Rattus norvegicus</name>
    <name type="common">Rat</name>
    <dbReference type="NCBI Taxonomy" id="10116"/>
    <lineage>
        <taxon>Eukaryota</taxon>
        <taxon>Metazoa</taxon>
        <taxon>Chordata</taxon>
        <taxon>Craniata</taxon>
        <taxon>Vertebrata</taxon>
        <taxon>Euteleostomi</taxon>
        <taxon>Mammalia</taxon>
        <taxon>Eutheria</taxon>
        <taxon>Euarchontoglires</taxon>
        <taxon>Glires</taxon>
        <taxon>Rodentia</taxon>
        <taxon>Myomorpha</taxon>
        <taxon>Muroidea</taxon>
        <taxon>Muridae</taxon>
        <taxon>Murinae</taxon>
        <taxon>Rattus</taxon>
    </lineage>
</organism>
<name>PIP_RAT</name>
<sequence length="146" mass="16439">MQGLSFTSTAATFFLVLCLQLGINEGQDNETIPQPLLFQLNVPSTPDENQEVDMSLTLQTQYKECLVVKAYLISNTPVDGGFNYIQTRCICNDHPTTLYWTFVVTQTLTFRIMVDIVKDKGICPNNVAVVPISGNRYFTDRTVYVN</sequence>
<evidence type="ECO:0000250" key="1"/>
<evidence type="ECO:0000250" key="2">
    <source>
        <dbReference type="UniProtKB" id="P12273"/>
    </source>
</evidence>
<evidence type="ECO:0000255" key="3"/>
<evidence type="ECO:0000305" key="4"/>
<gene>
    <name type="primary">Pip</name>
</gene>
<protein>
    <recommendedName>
        <fullName>Prolactin-inducible protein homolog</fullName>
    </recommendedName>
    <alternativeName>
        <fullName>Prolactin-induced protein</fullName>
    </alternativeName>
</protein>
<dbReference type="EMBL" id="AF054270">
    <property type="protein sequence ID" value="AAC08020.1"/>
    <property type="molecule type" value="mRNA"/>
</dbReference>
<dbReference type="RefSeq" id="NP_073199.1">
    <property type="nucleotide sequence ID" value="NM_022708.2"/>
</dbReference>
<dbReference type="SMR" id="O70417"/>
<dbReference type="FunCoup" id="O70417">
    <property type="interactions" value="13"/>
</dbReference>
<dbReference type="STRING" id="10116.ENSRNOP00000021576"/>
<dbReference type="GlyCosmos" id="O70417">
    <property type="glycosylation" value="1 site, No reported glycans"/>
</dbReference>
<dbReference type="GlyGen" id="O70417">
    <property type="glycosylation" value="1 site"/>
</dbReference>
<dbReference type="PhosphoSitePlus" id="O70417"/>
<dbReference type="PaxDb" id="10116-ENSRNOP00000021576"/>
<dbReference type="GeneID" id="64673"/>
<dbReference type="KEGG" id="rno:64673"/>
<dbReference type="UCSC" id="RGD:70946">
    <property type="organism name" value="rat"/>
</dbReference>
<dbReference type="AGR" id="RGD:70946"/>
<dbReference type="CTD" id="5304"/>
<dbReference type="RGD" id="70946">
    <property type="gene designation" value="Pip"/>
</dbReference>
<dbReference type="eggNOG" id="ENOG502T2PG">
    <property type="taxonomic scope" value="Eukaryota"/>
</dbReference>
<dbReference type="InParanoid" id="O70417"/>
<dbReference type="OrthoDB" id="52630at9989"/>
<dbReference type="PhylomeDB" id="O70417"/>
<dbReference type="Reactome" id="R-RNO-5223345">
    <property type="pathway name" value="Miscellaneous transport and binding events"/>
</dbReference>
<dbReference type="PRO" id="PR:O70417"/>
<dbReference type="Proteomes" id="UP000002494">
    <property type="component" value="Unplaced"/>
</dbReference>
<dbReference type="GO" id="GO:0016324">
    <property type="term" value="C:apical plasma membrane"/>
    <property type="evidence" value="ECO:0000266"/>
    <property type="project" value="RGD"/>
</dbReference>
<dbReference type="GO" id="GO:0005576">
    <property type="term" value="C:extracellular region"/>
    <property type="evidence" value="ECO:0000266"/>
    <property type="project" value="RGD"/>
</dbReference>
<dbReference type="GO" id="GO:0005615">
    <property type="term" value="C:extracellular space"/>
    <property type="evidence" value="ECO:0000266"/>
    <property type="project" value="RGD"/>
</dbReference>
<dbReference type="GO" id="GO:0005634">
    <property type="term" value="C:nucleus"/>
    <property type="evidence" value="ECO:0000266"/>
    <property type="project" value="RGD"/>
</dbReference>
<dbReference type="GO" id="GO:0004190">
    <property type="term" value="F:aspartic-type endopeptidase activity"/>
    <property type="evidence" value="ECO:0000266"/>
    <property type="project" value="RGD"/>
</dbReference>
<dbReference type="GO" id="GO:0042802">
    <property type="term" value="F:identical protein binding"/>
    <property type="evidence" value="ECO:0000266"/>
    <property type="project" value="RGD"/>
</dbReference>
<dbReference type="GO" id="GO:0019864">
    <property type="term" value="F:IgG binding"/>
    <property type="evidence" value="ECO:0000266"/>
    <property type="project" value="RGD"/>
</dbReference>
<dbReference type="GO" id="GO:0001580">
    <property type="term" value="P:detection of chemical stimulus involved in sensory perception of bitter taste"/>
    <property type="evidence" value="ECO:0000266"/>
    <property type="project" value="RGD"/>
</dbReference>
<dbReference type="GO" id="GO:0070233">
    <property type="term" value="P:negative regulation of T cell apoptotic process"/>
    <property type="evidence" value="ECO:0000266"/>
    <property type="project" value="RGD"/>
</dbReference>
<dbReference type="GO" id="GO:0010628">
    <property type="term" value="P:positive regulation of gene expression"/>
    <property type="evidence" value="ECO:0000266"/>
    <property type="project" value="RGD"/>
</dbReference>
<dbReference type="GO" id="GO:0006508">
    <property type="term" value="P:proteolysis"/>
    <property type="evidence" value="ECO:0000266"/>
    <property type="project" value="RGD"/>
</dbReference>
<dbReference type="GO" id="GO:0002682">
    <property type="term" value="P:regulation of immune system process"/>
    <property type="evidence" value="ECO:0000266"/>
    <property type="project" value="RGD"/>
</dbReference>
<dbReference type="FunFam" id="2.60.40.10:FF:001572">
    <property type="entry name" value="Prolactin-inducible protein homolog"/>
    <property type="match status" value="1"/>
</dbReference>
<dbReference type="Gene3D" id="2.60.40.10">
    <property type="entry name" value="Immunoglobulins"/>
    <property type="match status" value="1"/>
</dbReference>
<dbReference type="InterPro" id="IPR013783">
    <property type="entry name" value="Ig-like_fold"/>
</dbReference>
<dbReference type="InterPro" id="IPR014756">
    <property type="entry name" value="Ig_E-set"/>
</dbReference>
<dbReference type="InterPro" id="IPR007990">
    <property type="entry name" value="PIP"/>
</dbReference>
<dbReference type="PANTHER" id="PTHR15096:SF5">
    <property type="entry name" value="PROLACTIN-INDUCIBLE PROTEIN"/>
    <property type="match status" value="1"/>
</dbReference>
<dbReference type="PANTHER" id="PTHR15096">
    <property type="entry name" value="PROLACTIN-INDUCIBLE PROTEIN/SEMINAL VESICLE ANTIGEN"/>
    <property type="match status" value="1"/>
</dbReference>
<dbReference type="Pfam" id="PF05326">
    <property type="entry name" value="SVA"/>
    <property type="match status" value="1"/>
</dbReference>
<dbReference type="PIRSF" id="PIRSF002572">
    <property type="entry name" value="PIP-GCDFP-15"/>
    <property type="match status" value="1"/>
</dbReference>
<dbReference type="SUPFAM" id="SSF81296">
    <property type="entry name" value="E set domains"/>
    <property type="match status" value="1"/>
</dbReference>
<proteinExistence type="evidence at transcript level"/>
<reference key="1">
    <citation type="journal article" date="1998" name="J. Histochem. Cytochem.">
        <title>Expression of gross cystic disease fluid protein-15/Prolactin-inducible protein in rat salivary glands.</title>
        <authorList>
            <person name="Mirels L."/>
            <person name="Hand A.R."/>
            <person name="Branin H.J."/>
        </authorList>
    </citation>
    <scope>NUCLEOTIDE SEQUENCE [MRNA]</scope>
    <source>
        <strain>Sprague-Dawley</strain>
        <tissue>Salivary gland</tissue>
    </source>
</reference>
<comment type="subunit">
    <text evidence="1">Monomer. Interacts with AZGP1 (By similarity).</text>
</comment>
<comment type="subcellular location">
    <subcellularLocation>
        <location evidence="4">Secreted</location>
    </subcellularLocation>
</comment>
<comment type="similarity">
    <text evidence="4">Belongs to the PIP family.</text>
</comment>
<keyword id="KW-1015">Disulfide bond</keyword>
<keyword id="KW-0325">Glycoprotein</keyword>
<keyword id="KW-0873">Pyrrolidone carboxylic acid</keyword>
<keyword id="KW-1185">Reference proteome</keyword>
<keyword id="KW-0964">Secreted</keyword>
<keyword id="KW-0732">Signal</keyword>